<comment type="function">
    <text evidence="1">The RecF protein is involved in DNA metabolism; it is required for DNA replication and normal SOS inducibility. RecF binds preferentially to single-stranded, linear DNA. It also seems to bind ATP.</text>
</comment>
<comment type="subcellular location">
    <subcellularLocation>
        <location evidence="1">Cytoplasm</location>
    </subcellularLocation>
</comment>
<comment type="similarity">
    <text evidence="1">Belongs to the RecF family.</text>
</comment>
<sequence length="357" mass="40514">MSLTRLLIKDFRNIENADLALSPGFNFLVGANGSGKTSVLEAIYTLGHGRAFRSLQPGRVIRHEQEAFVLHGRLQGEEREMSIGLTKDKQGDSKVRIDGTDGHKIAELAHLMPMQLITPEGFTLLNGGPKYRRAFLDWGCFHNEAGFFTAWSNLKRLLKQRNAALRQVSRYEQLRPWDKELIPLAEQISTWRAEYSSAIAQDMADTCQQFLPEFSLTFSFQRGWEKETDYADVLERSFERDRMLTYTAHGPHKADFRIRADGAPVEDTLSRGQLKLLMCALRLAQGEFLTRESGRRCLYLIDDFASELDDARRGLLASRLKATQSQVFVSAISAEHVIDMSDENSKMFTVEKGKITD</sequence>
<organism>
    <name type="scientific">Salmonella paratyphi A (strain AKU_12601)</name>
    <dbReference type="NCBI Taxonomy" id="554290"/>
    <lineage>
        <taxon>Bacteria</taxon>
        <taxon>Pseudomonadati</taxon>
        <taxon>Pseudomonadota</taxon>
        <taxon>Gammaproteobacteria</taxon>
        <taxon>Enterobacterales</taxon>
        <taxon>Enterobacteriaceae</taxon>
        <taxon>Salmonella</taxon>
    </lineage>
</organism>
<gene>
    <name evidence="1" type="primary">recF</name>
    <name type="ordered locus">SSPA3435</name>
</gene>
<proteinExistence type="inferred from homology"/>
<protein>
    <recommendedName>
        <fullName evidence="1">DNA replication and repair protein RecF</fullName>
    </recommendedName>
</protein>
<keyword id="KW-0067">ATP-binding</keyword>
<keyword id="KW-0963">Cytoplasm</keyword>
<keyword id="KW-0227">DNA damage</keyword>
<keyword id="KW-0234">DNA repair</keyword>
<keyword id="KW-0235">DNA replication</keyword>
<keyword id="KW-0238">DNA-binding</keyword>
<keyword id="KW-0547">Nucleotide-binding</keyword>
<keyword id="KW-0742">SOS response</keyword>
<dbReference type="EMBL" id="FM200053">
    <property type="protein sequence ID" value="CAR61710.1"/>
    <property type="molecule type" value="Genomic_DNA"/>
</dbReference>
<dbReference type="RefSeq" id="WP_000060078.1">
    <property type="nucleotide sequence ID" value="NC_011147.1"/>
</dbReference>
<dbReference type="SMR" id="B5BIL2"/>
<dbReference type="KEGG" id="sek:SSPA3435"/>
<dbReference type="HOGENOM" id="CLU_040267_0_0_6"/>
<dbReference type="Proteomes" id="UP000001869">
    <property type="component" value="Chromosome"/>
</dbReference>
<dbReference type="GO" id="GO:0005737">
    <property type="term" value="C:cytoplasm"/>
    <property type="evidence" value="ECO:0007669"/>
    <property type="project" value="UniProtKB-SubCell"/>
</dbReference>
<dbReference type="GO" id="GO:0005524">
    <property type="term" value="F:ATP binding"/>
    <property type="evidence" value="ECO:0007669"/>
    <property type="project" value="UniProtKB-UniRule"/>
</dbReference>
<dbReference type="GO" id="GO:0003697">
    <property type="term" value="F:single-stranded DNA binding"/>
    <property type="evidence" value="ECO:0007669"/>
    <property type="project" value="UniProtKB-UniRule"/>
</dbReference>
<dbReference type="GO" id="GO:0006260">
    <property type="term" value="P:DNA replication"/>
    <property type="evidence" value="ECO:0007669"/>
    <property type="project" value="UniProtKB-UniRule"/>
</dbReference>
<dbReference type="GO" id="GO:0000731">
    <property type="term" value="P:DNA synthesis involved in DNA repair"/>
    <property type="evidence" value="ECO:0007669"/>
    <property type="project" value="TreeGrafter"/>
</dbReference>
<dbReference type="GO" id="GO:0006302">
    <property type="term" value="P:double-strand break repair"/>
    <property type="evidence" value="ECO:0007669"/>
    <property type="project" value="TreeGrafter"/>
</dbReference>
<dbReference type="GO" id="GO:0009432">
    <property type="term" value="P:SOS response"/>
    <property type="evidence" value="ECO:0007669"/>
    <property type="project" value="UniProtKB-UniRule"/>
</dbReference>
<dbReference type="FunFam" id="1.20.1050.90:FF:000001">
    <property type="entry name" value="DNA replication and repair protein RecF"/>
    <property type="match status" value="1"/>
</dbReference>
<dbReference type="Gene3D" id="3.40.50.300">
    <property type="entry name" value="P-loop containing nucleotide triphosphate hydrolases"/>
    <property type="match status" value="1"/>
</dbReference>
<dbReference type="Gene3D" id="1.20.1050.90">
    <property type="entry name" value="RecF/RecN/SMC, N-terminal domain"/>
    <property type="match status" value="1"/>
</dbReference>
<dbReference type="HAMAP" id="MF_00365">
    <property type="entry name" value="RecF"/>
    <property type="match status" value="1"/>
</dbReference>
<dbReference type="InterPro" id="IPR001238">
    <property type="entry name" value="DNA-binding_RecF"/>
</dbReference>
<dbReference type="InterPro" id="IPR018078">
    <property type="entry name" value="DNA-binding_RecF_CS"/>
</dbReference>
<dbReference type="InterPro" id="IPR027417">
    <property type="entry name" value="P-loop_NTPase"/>
</dbReference>
<dbReference type="InterPro" id="IPR003395">
    <property type="entry name" value="RecF/RecN/SMC_N"/>
</dbReference>
<dbReference type="InterPro" id="IPR042174">
    <property type="entry name" value="RecF_2"/>
</dbReference>
<dbReference type="NCBIfam" id="TIGR00611">
    <property type="entry name" value="recf"/>
    <property type="match status" value="1"/>
</dbReference>
<dbReference type="PANTHER" id="PTHR32182">
    <property type="entry name" value="DNA REPLICATION AND REPAIR PROTEIN RECF"/>
    <property type="match status" value="1"/>
</dbReference>
<dbReference type="PANTHER" id="PTHR32182:SF0">
    <property type="entry name" value="DNA REPLICATION AND REPAIR PROTEIN RECF"/>
    <property type="match status" value="1"/>
</dbReference>
<dbReference type="Pfam" id="PF02463">
    <property type="entry name" value="SMC_N"/>
    <property type="match status" value="1"/>
</dbReference>
<dbReference type="SUPFAM" id="SSF52540">
    <property type="entry name" value="P-loop containing nucleoside triphosphate hydrolases"/>
    <property type="match status" value="1"/>
</dbReference>
<dbReference type="PROSITE" id="PS00617">
    <property type="entry name" value="RECF_1"/>
    <property type="match status" value="1"/>
</dbReference>
<dbReference type="PROSITE" id="PS00618">
    <property type="entry name" value="RECF_2"/>
    <property type="match status" value="1"/>
</dbReference>
<reference key="1">
    <citation type="journal article" date="2009" name="BMC Genomics">
        <title>Pseudogene accumulation in the evolutionary histories of Salmonella enterica serovars Paratyphi A and Typhi.</title>
        <authorList>
            <person name="Holt K.E."/>
            <person name="Thomson N.R."/>
            <person name="Wain J."/>
            <person name="Langridge G.C."/>
            <person name="Hasan R."/>
            <person name="Bhutta Z.A."/>
            <person name="Quail M.A."/>
            <person name="Norbertczak H."/>
            <person name="Walker D."/>
            <person name="Simmonds M."/>
            <person name="White B."/>
            <person name="Bason N."/>
            <person name="Mungall K."/>
            <person name="Dougan G."/>
            <person name="Parkhill J."/>
        </authorList>
    </citation>
    <scope>NUCLEOTIDE SEQUENCE [LARGE SCALE GENOMIC DNA]</scope>
    <source>
        <strain>AKU_12601</strain>
    </source>
</reference>
<accession>B5BIL2</accession>
<feature type="chain" id="PRO_1000121152" description="DNA replication and repair protein RecF">
    <location>
        <begin position="1"/>
        <end position="357"/>
    </location>
</feature>
<feature type="binding site" evidence="1">
    <location>
        <begin position="30"/>
        <end position="37"/>
    </location>
    <ligand>
        <name>ATP</name>
        <dbReference type="ChEBI" id="CHEBI:30616"/>
    </ligand>
</feature>
<name>RECF_SALPK</name>
<evidence type="ECO:0000255" key="1">
    <source>
        <dbReference type="HAMAP-Rule" id="MF_00365"/>
    </source>
</evidence>